<sequence length="1072" mass="119200">MAAALLLYLPLLPGLAGAFNLDAENVIGRRGEPGSLFGFSLAMHRQLQPQEKRLLLVGAPREKAFPSQQANRTGGLYSCDITSSDTRCTRVVFDEDTDPKMESKEDQWMGVTVQSQGPGGNVVTCAHRYEKRQYVNTVQETRDIIGRCYVLSQDLTIKDDMDNGVWSFCDGRLRGHEKFGSCQQGVAATFTRDYHYIVFGAPGTYNWKGVVRAEQKNQTFYDLGIFDDGPYEVGDESRQDKNLVPVPANSYLGFSLDSGKGIVSQDEMTFVSGAPRANHSGAVVLLKKEKNQRALSLEHMFEGEGLASSFGYDVAVVDLNSDGWQDIVVGAPQYFDRSGDIGGAVYIYINQRGKWEGIKPIRLNGTADSMFGLAVENVGDINQDGYPDIAVGAPYDGFGKVYIYHGSKNGINTEPAQILDGEKTGTNFFGYSIAGNMDLDKNSYPDIAVGSLSDSVSVFRSRPVISITKSITVQPDKLDLKKKNPEDPSEIWMDVKACFQYTANPRNLNPRIKINYTFEAENERRQLGLPSRVRFKDYLSDQFTASTTLIGQNSKRCVTAKLVLQEKIKDKLRPIPIAVSVNIAGLESGSSSTRKERALPDLIPILNSNESETKITKVEFLKEGCGEDNECHSNLKLQYRFCTREGNEDRFTYLPIENGIPVLVLKDQKDIALEITVTNNPSDARNPQKDGEDAYEAKLIATFPDSLTYSAFREMRGYPEKQLTCGANQNGSQAECELGNPFKRNSNVTFYLILSTTKVNVDTTDLDINLKLETTSTQVNSTAITASAKVVLELLLSLTGVAKPSQVYFGGNIVGESAMKSEDNIGNLIEYEFRVTNLGRPLKTFGTASLDIQWPKEISNGKWLLYLMKIESKGLEKVSCQPQNEINVLHVAESHNSRRKREIAEKQLTDSKTFSLFSERKYKTLDCKVNAQCVDIRCPLKGFDSKASILLRSRLWNSTFLEEFSKMNYLDILVRASISVPAAAKNVKLTNEAAQVRVTVFPAKPVALYTGVPWWIIAVAIFAGVLMLALLVFLLWKCGFFKRSKKDHYDATYHKAEIHAQPSDKERLTSDA</sequence>
<proteinExistence type="evidence at transcript level"/>
<gene>
    <name type="primary">ITGA6</name>
</gene>
<organism>
    <name type="scientific">Gallus gallus</name>
    <name type="common">Chicken</name>
    <dbReference type="NCBI Taxonomy" id="9031"/>
    <lineage>
        <taxon>Eukaryota</taxon>
        <taxon>Metazoa</taxon>
        <taxon>Chordata</taxon>
        <taxon>Craniata</taxon>
        <taxon>Vertebrata</taxon>
        <taxon>Euteleostomi</taxon>
        <taxon>Archelosauria</taxon>
        <taxon>Archosauria</taxon>
        <taxon>Dinosauria</taxon>
        <taxon>Saurischia</taxon>
        <taxon>Theropoda</taxon>
        <taxon>Coelurosauria</taxon>
        <taxon>Aves</taxon>
        <taxon>Neognathae</taxon>
        <taxon>Galloanserae</taxon>
        <taxon>Galliformes</taxon>
        <taxon>Phasianidae</taxon>
        <taxon>Phasianinae</taxon>
        <taxon>Gallus</taxon>
    </lineage>
</organism>
<name>ITA6_CHICK</name>
<reference key="1">
    <citation type="journal article" date="1991" name="J. Cell Biol.">
        <title>Laminin receptors in the retina: sequence analysis of the chick integrin alpha 6 subunit. Evidence for transcriptional and posttranslational regulation.</title>
        <authorList>
            <person name="de Curtis I."/>
            <person name="Quaranta V."/>
            <person name="Tamura R.N."/>
            <person name="Reichardt L.F."/>
        </authorList>
    </citation>
    <scope>NUCLEOTIDE SEQUENCE [MRNA]</scope>
    <source>
        <strain>White leghorn</strain>
        <tissue>Retina</tissue>
    </source>
</reference>
<accession>P26007</accession>
<keyword id="KW-0106">Calcium</keyword>
<keyword id="KW-0130">Cell adhesion</keyword>
<keyword id="KW-1003">Cell membrane</keyword>
<keyword id="KW-0165">Cleavage on pair of basic residues</keyword>
<keyword id="KW-1015">Disulfide bond</keyword>
<keyword id="KW-0325">Glycoprotein</keyword>
<keyword id="KW-0401">Integrin</keyword>
<keyword id="KW-0449">Lipoprotein</keyword>
<keyword id="KW-0472">Membrane</keyword>
<keyword id="KW-0479">Metal-binding</keyword>
<keyword id="KW-0564">Palmitate</keyword>
<keyword id="KW-0597">Phosphoprotein</keyword>
<keyword id="KW-0675">Receptor</keyword>
<keyword id="KW-1185">Reference proteome</keyword>
<keyword id="KW-0677">Repeat</keyword>
<keyword id="KW-0732">Signal</keyword>
<keyword id="KW-0812">Transmembrane</keyword>
<keyword id="KW-1133">Transmembrane helix</keyword>
<evidence type="ECO:0000250" key="1"/>
<evidence type="ECO:0000250" key="2">
    <source>
        <dbReference type="UniProtKB" id="P08648"/>
    </source>
</evidence>
<evidence type="ECO:0000250" key="3">
    <source>
        <dbReference type="UniProtKB" id="P23229"/>
    </source>
</evidence>
<evidence type="ECO:0000250" key="4">
    <source>
        <dbReference type="UniProtKB" id="Q61739"/>
    </source>
</evidence>
<evidence type="ECO:0000255" key="5"/>
<evidence type="ECO:0000255" key="6">
    <source>
        <dbReference type="PROSITE-ProRule" id="PRU00803"/>
    </source>
</evidence>
<evidence type="ECO:0000305" key="7"/>
<feature type="signal peptide" evidence="3">
    <location>
        <begin position="1"/>
        <end position="18"/>
    </location>
</feature>
<feature type="chain" id="PRO_0000016264" description="Integrin alpha-6">
    <location>
        <begin position="19"/>
        <end position="1072"/>
    </location>
</feature>
<feature type="chain" id="PRO_0000016265" description="Integrin alpha-6 heavy chain" evidence="5">
    <location>
        <begin position="19"/>
        <end position="898"/>
    </location>
</feature>
<feature type="chain" id="PRO_0000016266" description="Integrin alpha-6 light chain" evidence="5">
    <location>
        <begin position="902"/>
        <end position="1072"/>
    </location>
</feature>
<feature type="topological domain" description="Extracellular" evidence="5">
    <location>
        <begin position="19"/>
        <end position="1010"/>
    </location>
</feature>
<feature type="transmembrane region" description="Helical" evidence="5">
    <location>
        <begin position="1011"/>
        <end position="1036"/>
    </location>
</feature>
<feature type="topological domain" description="Cytoplasmic" evidence="5">
    <location>
        <begin position="1037"/>
        <end position="1072"/>
    </location>
</feature>
<feature type="repeat" description="FG-GAP 1" evidence="6">
    <location>
        <begin position="23"/>
        <end position="88"/>
    </location>
</feature>
<feature type="repeat" description="FG-GAP 2" evidence="6">
    <location>
        <begin position="94"/>
        <end position="160"/>
    </location>
</feature>
<feature type="repeat" description="FG-GAP 3" evidence="6">
    <location>
        <begin position="170"/>
        <end position="223"/>
    </location>
</feature>
<feature type="repeat" description="FG-GAP 4" evidence="6">
    <location>
        <begin position="238"/>
        <end position="295"/>
    </location>
</feature>
<feature type="repeat" description="FG-GAP 5" evidence="6">
    <location>
        <begin position="296"/>
        <end position="357"/>
    </location>
</feature>
<feature type="repeat" description="FG-GAP 6" evidence="6">
    <location>
        <begin position="358"/>
        <end position="413"/>
    </location>
</feature>
<feature type="repeat" description="FG-GAP 7" evidence="6">
    <location>
        <begin position="414"/>
        <end position="476"/>
    </location>
</feature>
<feature type="short sequence motif" description="GFFKR motif">
    <location>
        <begin position="1039"/>
        <end position="1043"/>
    </location>
</feature>
<feature type="binding site" evidence="2">
    <location>
        <position position="318"/>
    </location>
    <ligand>
        <name>Ca(2+)</name>
        <dbReference type="ChEBI" id="CHEBI:29108"/>
        <label>1</label>
    </ligand>
</feature>
<feature type="binding site" evidence="2">
    <location>
        <position position="320"/>
    </location>
    <ligand>
        <name>Ca(2+)</name>
        <dbReference type="ChEBI" id="CHEBI:29108"/>
        <label>1</label>
    </ligand>
</feature>
<feature type="binding site" evidence="2">
    <location>
        <position position="322"/>
    </location>
    <ligand>
        <name>Ca(2+)</name>
        <dbReference type="ChEBI" id="CHEBI:29108"/>
        <label>1</label>
    </ligand>
</feature>
<feature type="binding site" evidence="2">
    <location>
        <position position="326"/>
    </location>
    <ligand>
        <name>Ca(2+)</name>
        <dbReference type="ChEBI" id="CHEBI:29108"/>
        <label>1</label>
    </ligand>
</feature>
<feature type="binding site" evidence="2">
    <location>
        <position position="380"/>
    </location>
    <ligand>
        <name>Ca(2+)</name>
        <dbReference type="ChEBI" id="CHEBI:29108"/>
        <label>2</label>
    </ligand>
</feature>
<feature type="binding site" evidence="2">
    <location>
        <position position="382"/>
    </location>
    <ligand>
        <name>Ca(2+)</name>
        <dbReference type="ChEBI" id="CHEBI:29108"/>
        <label>2</label>
    </ligand>
</feature>
<feature type="binding site" evidence="2">
    <location>
        <position position="384"/>
    </location>
    <ligand>
        <name>Ca(2+)</name>
        <dbReference type="ChEBI" id="CHEBI:29108"/>
        <label>2</label>
    </ligand>
</feature>
<feature type="binding site" evidence="2">
    <location>
        <position position="386"/>
    </location>
    <ligand>
        <name>Ca(2+)</name>
        <dbReference type="ChEBI" id="CHEBI:29108"/>
        <label>2</label>
    </ligand>
</feature>
<feature type="binding site" evidence="2">
    <location>
        <position position="388"/>
    </location>
    <ligand>
        <name>Ca(2+)</name>
        <dbReference type="ChEBI" id="CHEBI:29108"/>
        <label>2</label>
    </ligand>
</feature>
<feature type="binding site" evidence="2">
    <location>
        <position position="438"/>
    </location>
    <ligand>
        <name>Ca(2+)</name>
        <dbReference type="ChEBI" id="CHEBI:29108"/>
        <label>3</label>
    </ligand>
</feature>
<feature type="binding site" evidence="2">
    <location>
        <position position="440"/>
    </location>
    <ligand>
        <name>Ca(2+)</name>
        <dbReference type="ChEBI" id="CHEBI:29108"/>
        <label>3</label>
    </ligand>
</feature>
<feature type="binding site" evidence="2">
    <location>
        <position position="442"/>
    </location>
    <ligand>
        <name>Ca(2+)</name>
        <dbReference type="ChEBI" id="CHEBI:29108"/>
        <label>3</label>
    </ligand>
</feature>
<feature type="binding site" evidence="2">
    <location>
        <position position="444"/>
    </location>
    <ligand>
        <name>Ca(2+)</name>
        <dbReference type="ChEBI" id="CHEBI:29108"/>
        <label>3</label>
    </ligand>
</feature>
<feature type="binding site" evidence="2">
    <location>
        <position position="446"/>
    </location>
    <ligand>
        <name>Ca(2+)</name>
        <dbReference type="ChEBI" id="CHEBI:29108"/>
        <label>3</label>
    </ligand>
</feature>
<feature type="modified residue" description="Phosphoserine; by CaMK2" evidence="5">
    <location>
        <position position="1070"/>
    </location>
</feature>
<feature type="lipid moiety-binding region" description="S-palmitoyl cysteine; by DHHC3" evidence="1">
    <location>
        <position position="1038"/>
    </location>
</feature>
<feature type="glycosylation site" description="N-linked (GlcNAc...) asparagine" evidence="5">
    <location>
        <position position="71"/>
    </location>
</feature>
<feature type="glycosylation site" description="N-linked (GlcNAc...) asparagine" evidence="5">
    <location>
        <position position="217"/>
    </location>
</feature>
<feature type="glycosylation site" description="N-linked (GlcNAc...) asparagine" evidence="5">
    <location>
        <position position="278"/>
    </location>
</feature>
<feature type="glycosylation site" description="N-linked (GlcNAc...) asparagine" evidence="5">
    <location>
        <position position="364"/>
    </location>
</feature>
<feature type="glycosylation site" description="N-linked (GlcNAc...) asparagine" evidence="5">
    <location>
        <position position="515"/>
    </location>
</feature>
<feature type="glycosylation site" description="N-linked (GlcNAc...) asparagine" evidence="5">
    <location>
        <position position="609"/>
    </location>
</feature>
<feature type="glycosylation site" description="N-linked (GlcNAc...) asparagine" evidence="5">
    <location>
        <position position="730"/>
    </location>
</feature>
<feature type="glycosylation site" description="N-linked (GlcNAc...) asparagine" evidence="5">
    <location>
        <position position="747"/>
    </location>
</feature>
<feature type="glycosylation site" description="N-linked (GlcNAc...) asparagine" evidence="5">
    <location>
        <position position="780"/>
    </location>
</feature>
<feature type="glycosylation site" description="N-linked (GlcNAc...) asparagine" evidence="5">
    <location>
        <position position="957"/>
    </location>
</feature>
<feature type="disulfide bond" evidence="1">
    <location>
        <begin position="79"/>
        <end position="88"/>
    </location>
</feature>
<feature type="disulfide bond" evidence="1">
    <location>
        <begin position="125"/>
        <end position="148"/>
    </location>
</feature>
<feature type="disulfide bond" evidence="1">
    <location>
        <begin position="169"/>
        <end position="182"/>
    </location>
</feature>
<feature type="disulfide bond" evidence="1">
    <location>
        <begin position="498"/>
        <end position="557"/>
    </location>
</feature>
<feature type="disulfide bond" evidence="1">
    <location>
        <begin position="625"/>
        <end position="631"/>
    </location>
</feature>
<feature type="disulfide bond" evidence="1">
    <location>
        <begin position="725"/>
        <end position="736"/>
    </location>
</feature>
<feature type="disulfide bond" description="Interchain (between heavy and light chains)" evidence="1">
    <location>
        <begin position="880"/>
        <end position="927"/>
    </location>
</feature>
<feature type="disulfide bond" evidence="1">
    <location>
        <begin position="933"/>
        <end position="938"/>
    </location>
</feature>
<protein>
    <recommendedName>
        <fullName>Integrin alpha-6</fullName>
    </recommendedName>
    <alternativeName>
        <fullName>VLA-6</fullName>
    </alternativeName>
    <component>
        <recommendedName>
            <fullName>Integrin alpha-6 heavy chain</fullName>
        </recommendedName>
    </component>
    <component>
        <recommendedName>
            <fullName>Integrin alpha-6 light chain</fullName>
        </recommendedName>
    </component>
</protein>
<dbReference type="EMBL" id="X56559">
    <property type="protein sequence ID" value="CAA39909.1"/>
    <property type="molecule type" value="mRNA"/>
</dbReference>
<dbReference type="PIR" id="A38457">
    <property type="entry name" value="A38457"/>
</dbReference>
<dbReference type="RefSeq" id="NP_990620.1">
    <property type="nucleotide sequence ID" value="NM_205289.1"/>
</dbReference>
<dbReference type="SMR" id="P26007"/>
<dbReference type="FunCoup" id="P26007">
    <property type="interactions" value="1396"/>
</dbReference>
<dbReference type="STRING" id="9031.ENSGALP00000056234"/>
<dbReference type="GlyCosmos" id="P26007">
    <property type="glycosylation" value="10 sites, No reported glycans"/>
</dbReference>
<dbReference type="GlyGen" id="P26007">
    <property type="glycosylation" value="10 sites"/>
</dbReference>
<dbReference type="PaxDb" id="9031-ENSGALP00000037814"/>
<dbReference type="GeneID" id="396226"/>
<dbReference type="KEGG" id="gga:396226"/>
<dbReference type="CTD" id="3655"/>
<dbReference type="VEuPathDB" id="HostDB:geneid_396226"/>
<dbReference type="eggNOG" id="KOG3637">
    <property type="taxonomic scope" value="Eukaryota"/>
</dbReference>
<dbReference type="InParanoid" id="P26007"/>
<dbReference type="OrthoDB" id="5317514at2759"/>
<dbReference type="PhylomeDB" id="P26007"/>
<dbReference type="Reactome" id="R-GGA-210991">
    <property type="pathway name" value="Basigin interactions"/>
</dbReference>
<dbReference type="Reactome" id="R-GGA-216083">
    <property type="pathway name" value="Integrin cell surface interactions"/>
</dbReference>
<dbReference type="PRO" id="PR:P26007"/>
<dbReference type="Proteomes" id="UP000000539">
    <property type="component" value="Chromosome 7"/>
</dbReference>
<dbReference type="Bgee" id="ENSGALG00000034007">
    <property type="expression patterns" value="Expressed in spermatocyte and 13 other cell types or tissues"/>
</dbReference>
<dbReference type="GO" id="GO:0009986">
    <property type="term" value="C:cell surface"/>
    <property type="evidence" value="ECO:0000314"/>
    <property type="project" value="AgBase"/>
</dbReference>
<dbReference type="GO" id="GO:0009897">
    <property type="term" value="C:external side of plasma membrane"/>
    <property type="evidence" value="ECO:0000318"/>
    <property type="project" value="GO_Central"/>
</dbReference>
<dbReference type="GO" id="GO:0008305">
    <property type="term" value="C:integrin complex"/>
    <property type="evidence" value="ECO:0000318"/>
    <property type="project" value="GO_Central"/>
</dbReference>
<dbReference type="GO" id="GO:0031994">
    <property type="term" value="F:insulin-like growth factor I binding"/>
    <property type="evidence" value="ECO:0000250"/>
    <property type="project" value="UniProtKB"/>
</dbReference>
<dbReference type="GO" id="GO:0005178">
    <property type="term" value="F:integrin binding"/>
    <property type="evidence" value="ECO:0000318"/>
    <property type="project" value="GO_Central"/>
</dbReference>
<dbReference type="GO" id="GO:0046872">
    <property type="term" value="F:metal ion binding"/>
    <property type="evidence" value="ECO:0007669"/>
    <property type="project" value="UniProtKB-KW"/>
</dbReference>
<dbReference type="GO" id="GO:0038132">
    <property type="term" value="F:neuregulin binding"/>
    <property type="evidence" value="ECO:0000250"/>
    <property type="project" value="UniProtKB"/>
</dbReference>
<dbReference type="GO" id="GO:0033627">
    <property type="term" value="P:cell adhesion mediated by integrin"/>
    <property type="evidence" value="ECO:0000318"/>
    <property type="project" value="GO_Central"/>
</dbReference>
<dbReference type="GO" id="GO:0098609">
    <property type="term" value="P:cell-cell adhesion"/>
    <property type="evidence" value="ECO:0000318"/>
    <property type="project" value="GO_Central"/>
</dbReference>
<dbReference type="GO" id="GO:0007229">
    <property type="term" value="P:integrin-mediated signaling pathway"/>
    <property type="evidence" value="ECO:0000318"/>
    <property type="project" value="GO_Central"/>
</dbReference>
<dbReference type="GO" id="GO:0050900">
    <property type="term" value="P:leukocyte migration"/>
    <property type="evidence" value="ECO:0000318"/>
    <property type="project" value="GO_Central"/>
</dbReference>
<dbReference type="FunFam" id="2.130.10.130:FF:000002">
    <property type="entry name" value="integrin alpha-6 isoform X2"/>
    <property type="match status" value="1"/>
</dbReference>
<dbReference type="FunFam" id="2.60.40.1510:FF:000002">
    <property type="entry name" value="integrin alpha-6 isoform X2"/>
    <property type="match status" value="1"/>
</dbReference>
<dbReference type="FunFam" id="2.60.40.1460:FF:000002">
    <property type="entry name" value="Integrin subunit alpha 6"/>
    <property type="match status" value="1"/>
</dbReference>
<dbReference type="FunFam" id="2.60.40.1530:FF:000001">
    <property type="entry name" value="Integrin subunit alpha 7"/>
    <property type="match status" value="1"/>
</dbReference>
<dbReference type="FunFam" id="1.20.5.930:FF:000001">
    <property type="entry name" value="Integrin subunit alpha V"/>
    <property type="match status" value="1"/>
</dbReference>
<dbReference type="Gene3D" id="1.20.5.930">
    <property type="entry name" value="Bicelle-embedded integrin alpha(iib) transmembrane segment"/>
    <property type="match status" value="1"/>
</dbReference>
<dbReference type="Gene3D" id="2.130.10.130">
    <property type="entry name" value="Integrin alpha, N-terminal"/>
    <property type="match status" value="1"/>
</dbReference>
<dbReference type="Gene3D" id="2.60.40.1460">
    <property type="entry name" value="Integrin domains. Chain A, domain 2"/>
    <property type="match status" value="1"/>
</dbReference>
<dbReference type="Gene3D" id="2.60.40.1510">
    <property type="entry name" value="ntegrin, alpha v. Chain A, domain 3"/>
    <property type="match status" value="1"/>
</dbReference>
<dbReference type="Gene3D" id="2.60.40.1530">
    <property type="entry name" value="ntegrin, alpha v. Chain A, domain 4"/>
    <property type="match status" value="1"/>
</dbReference>
<dbReference type="InterPro" id="IPR013517">
    <property type="entry name" value="FG-GAP"/>
</dbReference>
<dbReference type="InterPro" id="IPR013519">
    <property type="entry name" value="Int_alpha_beta-p"/>
</dbReference>
<dbReference type="InterPro" id="IPR000413">
    <property type="entry name" value="Integrin_alpha"/>
</dbReference>
<dbReference type="InterPro" id="IPR018184">
    <property type="entry name" value="Integrin_alpha_C_CS"/>
</dbReference>
<dbReference type="InterPro" id="IPR013649">
    <property type="entry name" value="Integrin_alpha_Ig-like_1"/>
</dbReference>
<dbReference type="InterPro" id="IPR048285">
    <property type="entry name" value="Integrin_alpha_Ig-like_2"/>
</dbReference>
<dbReference type="InterPro" id="IPR048286">
    <property type="entry name" value="Integrin_alpha_Ig-like_3"/>
</dbReference>
<dbReference type="InterPro" id="IPR028994">
    <property type="entry name" value="Integrin_alpha_N"/>
</dbReference>
<dbReference type="InterPro" id="IPR032695">
    <property type="entry name" value="Integrin_dom_sf"/>
</dbReference>
<dbReference type="PANTHER" id="PTHR23220">
    <property type="entry name" value="INTEGRIN ALPHA"/>
    <property type="match status" value="1"/>
</dbReference>
<dbReference type="PANTHER" id="PTHR23220:SF9">
    <property type="entry name" value="INTEGRIN ALPHA-6"/>
    <property type="match status" value="1"/>
</dbReference>
<dbReference type="Pfam" id="PF01839">
    <property type="entry name" value="FG-GAP"/>
    <property type="match status" value="2"/>
</dbReference>
<dbReference type="Pfam" id="PF08441">
    <property type="entry name" value="Integrin_A_Ig_1"/>
    <property type="match status" value="1"/>
</dbReference>
<dbReference type="Pfam" id="PF20805">
    <property type="entry name" value="Integrin_A_Ig_2"/>
    <property type="match status" value="1"/>
</dbReference>
<dbReference type="Pfam" id="PF20806">
    <property type="entry name" value="Integrin_A_Ig_3"/>
    <property type="match status" value="1"/>
</dbReference>
<dbReference type="Pfam" id="PF00357">
    <property type="entry name" value="Integrin_alpha"/>
    <property type="match status" value="1"/>
</dbReference>
<dbReference type="PRINTS" id="PR01185">
    <property type="entry name" value="INTEGRINA"/>
</dbReference>
<dbReference type="SMART" id="SM00191">
    <property type="entry name" value="Int_alpha"/>
    <property type="match status" value="5"/>
</dbReference>
<dbReference type="SUPFAM" id="SSF69318">
    <property type="entry name" value="Integrin alpha N-terminal domain"/>
    <property type="match status" value="1"/>
</dbReference>
<dbReference type="SUPFAM" id="SSF69179">
    <property type="entry name" value="Integrin domains"/>
    <property type="match status" value="3"/>
</dbReference>
<dbReference type="PROSITE" id="PS51470">
    <property type="entry name" value="FG_GAP"/>
    <property type="match status" value="7"/>
</dbReference>
<dbReference type="PROSITE" id="PS00242">
    <property type="entry name" value="INTEGRIN_ALPHA"/>
    <property type="match status" value="1"/>
</dbReference>
<comment type="function">
    <text evidence="4">Integrin alpha-6/beta-1 (ITGA6:ITGB1) is a receptor for laminin on platelets. Integrin alpha-6/beta-1 (ITGA6:ITGB1) is present in oocytes and is involved in sperm-egg fusion. Integrin alpha-6/beta-4 (ITGA6:ITGB4) is a receptor for laminin in epithelial cells and it plays a critical structural role in the hemidesmosome.</text>
</comment>
<comment type="subunit">
    <text evidence="4">Heterodimer of an alpha and a beta subunit. The alpha subunit is composed of a heavy and a light chain linked by a disulfide bond. Alpha-6 associates with either beta-1 (ITGB1) or beta-4 (ITGB4) to form ITGA6:ITGB1 and ITGA6:ITGB4, respectively.</text>
</comment>
<comment type="subcellular location">
    <subcellularLocation>
        <location evidence="3">Cell membrane</location>
        <topology evidence="5">Single-pass type I membrane protein</topology>
    </subcellularLocation>
    <subcellularLocation>
        <location evidence="3">Cell membrane</location>
        <topology evidence="3">Lipid-anchor</topology>
    </subcellularLocation>
</comment>
<comment type="developmental stage">
    <text>Alpha-6 levels decrease with age.</text>
</comment>
<comment type="PTM">
    <text>Phosphorylated in vivo.</text>
</comment>
<comment type="similarity">
    <text evidence="7">Belongs to the integrin alpha chain family.</text>
</comment>